<organism>
    <name type="scientific">Escherichia coli</name>
    <dbReference type="NCBI Taxonomy" id="562"/>
    <lineage>
        <taxon>Bacteria</taxon>
        <taxon>Pseudomonadati</taxon>
        <taxon>Pseudomonadota</taxon>
        <taxon>Gammaproteobacteria</taxon>
        <taxon>Enterobacterales</taxon>
        <taxon>Enterobacteriaceae</taxon>
        <taxon>Escherichia</taxon>
    </lineage>
</organism>
<accession>Q2PT27</accession>
<dbReference type="EMBL" id="DQ303921">
    <property type="protein sequence ID" value="ABC17630.2"/>
    <property type="molecule type" value="Genomic_DNA"/>
</dbReference>
<dbReference type="EMBL" id="HQ700359">
    <property type="protein sequence ID" value="AEJ36325.1"/>
    <property type="molecule type" value="Genomic_DNA"/>
</dbReference>
<dbReference type="EMBL" id="KC848778">
    <property type="protein sequence ID" value="AGI55898.1"/>
    <property type="molecule type" value="Genomic_DNA"/>
</dbReference>
<dbReference type="SMR" id="Q2PT27"/>
<dbReference type="CARD" id="ARO:3002718">
    <property type="molecule name" value="QnrB4"/>
    <property type="mechanism identifier" value="ARO:0001003"/>
    <property type="mechanism name" value="antibiotic target protection"/>
</dbReference>
<dbReference type="KEGG" id="ag:ABC17630"/>
<dbReference type="GO" id="GO:0046677">
    <property type="term" value="P:response to antibiotic"/>
    <property type="evidence" value="ECO:0007669"/>
    <property type="project" value="UniProtKB-KW"/>
</dbReference>
<dbReference type="Gene3D" id="2.160.20.80">
    <property type="entry name" value="E3 ubiquitin-protein ligase SopA"/>
    <property type="match status" value="1"/>
</dbReference>
<dbReference type="InterPro" id="IPR001646">
    <property type="entry name" value="5peptide_repeat"/>
</dbReference>
<dbReference type="InterPro" id="IPR051082">
    <property type="entry name" value="Pentapeptide-BTB/POZ_domain"/>
</dbReference>
<dbReference type="NCBIfam" id="NF033086">
    <property type="entry name" value="penta_rpt_Qnr"/>
    <property type="match status" value="1"/>
</dbReference>
<dbReference type="NCBIfam" id="NF000420">
    <property type="entry name" value="penta_rpt_QnrB"/>
    <property type="match status" value="1"/>
</dbReference>
<dbReference type="PANTHER" id="PTHR14136">
    <property type="entry name" value="BTB_POZ DOMAIN-CONTAINING PROTEIN KCTD9"/>
    <property type="match status" value="1"/>
</dbReference>
<dbReference type="PANTHER" id="PTHR14136:SF17">
    <property type="entry name" value="BTB_POZ DOMAIN-CONTAINING PROTEIN KCTD9"/>
    <property type="match status" value="1"/>
</dbReference>
<dbReference type="Pfam" id="PF00805">
    <property type="entry name" value="Pentapeptide"/>
    <property type="match status" value="1"/>
</dbReference>
<dbReference type="Pfam" id="PF13599">
    <property type="entry name" value="Pentapeptide_4"/>
    <property type="match status" value="1"/>
</dbReference>
<dbReference type="SUPFAM" id="SSF141571">
    <property type="entry name" value="Pentapeptide repeat-like"/>
    <property type="match status" value="1"/>
</dbReference>
<keyword id="KW-0046">Antibiotic resistance</keyword>
<keyword id="KW-0614">Plasmid</keyword>
<keyword id="KW-0677">Repeat</keyword>
<geneLocation type="plasmid">
    <name>pDEC216</name>
</geneLocation>
<geneLocation type="plasmid">
    <name>pEC37Tc</name>
</geneLocation>
<gene>
    <name evidence="2" type="primary">qnrB4</name>
</gene>
<feature type="chain" id="PRO_0000434156" description="Pentapeptide repeat protein QnrB4">
    <location>
        <begin position="1"/>
        <end position="215"/>
    </location>
</feature>
<feature type="domain" description="Pentapeptide repeat 1" evidence="4">
    <location>
        <begin position="25"/>
        <end position="104"/>
    </location>
</feature>
<feature type="domain" description="Pentapeptide repeat 2" evidence="4">
    <location>
        <begin position="117"/>
        <end position="191"/>
    </location>
</feature>
<comment type="function">
    <text evidence="1 5">Probably plays a role in resistance to quinolone antibiotics (PubMed:16870791). Only inhibits ATP-dependent DNA supercoiling by E.coli gyrase at high concentration (30 uM) (PubMed:19060136). Protects E.coli gyrase supercoiling activity from inhibition by fluoroquinolones (ciprofloxacin) at 0.1 uM, does not protect M.tuberculosis gyrase activity (PubMed:19060136).</text>
</comment>
<comment type="miscellaneous">
    <text evidence="5 6">The gene for this protein has been isolated from plasmids in multiple Enterobacteriaceae (PubMed:16870791, PubMed:19060136). For experiments in situ it was cloned from E.cloacae strain HM05-184 but tested in E.coli (PubMed:19060136).</text>
</comment>
<comment type="similarity">
    <text evidence="4">Belongs to the pentapeptide repeat protein family.</text>
</comment>
<name>QNRB4_ECOLX</name>
<reference key="1">
    <citation type="journal article" date="2006" name="Antimicrob. Agents Chemother.">
        <title>qnr prevalence in ceftazidime-resistant Enterobacteriaceae isolates from the United States.</title>
        <authorList>
            <person name="Robicsek A."/>
            <person name="Strahilevitz J."/>
            <person name="Sahm D.F."/>
            <person name="Jacoby G.A."/>
            <person name="Hooper D.C."/>
        </authorList>
    </citation>
    <scope>NUCLEOTIDE SEQUENCE [GENOMIC DNA]</scope>
    <scope>FUNCTION</scope>
</reference>
<reference key="2">
    <citation type="journal article" date="2011" name="Clin. Microbiol. Infect.">
        <title>Association of bla(DHA-1) and qnrB genes carried by broad-host-range plasmids among isolates of Enterobacteriaceae at a Spanish hospital.</title>
        <authorList>
            <person name="Mata C."/>
            <person name="Miro E."/>
            <person name="Toleman M."/>
            <person name="Rivera M.A."/>
            <person name="Walsh T.R."/>
            <person name="Navarro F."/>
        </authorList>
    </citation>
    <scope>NUCLEOTIDE SEQUENCE [GENOMIC DNA]</scope>
    <source>
        <strain>37Tc</strain>
        <plasmid>pEC37Tc</plasmid>
    </source>
</reference>
<reference key="3">
    <citation type="submission" date="2013-03" db="EMBL/GenBank/DDBJ databases">
        <title>Genetic environment of DHA-1 in Escherichia coli.</title>
        <authorList>
            <person name="Hu G."/>
            <person name="Han Z."/>
        </authorList>
    </citation>
    <scope>NUCLEOTIDE SEQUENCE [GENOMIC DNA]</scope>
    <source>
        <strain>DEC216</strain>
        <plasmid>pDEC216</plasmid>
    </source>
</reference>
<reference key="4">
    <citation type="journal article" date="2009" name="J. Bacteriol.">
        <title>The pentapeptide repeat proteins MfpAMt and QnrB4 exhibit opposite effects on DNA gyrase catalytic reactions and on the ternary gyrase-DNA-quinolone complex.</title>
        <authorList>
            <person name="Merens A."/>
            <person name="Matrat S."/>
            <person name="Aubry A."/>
            <person name="Lascols C."/>
            <person name="Jarlier V."/>
            <person name="Soussy C.J."/>
            <person name="Cavallo J.D."/>
            <person name="Cambau E."/>
        </authorList>
    </citation>
    <scope>FUNCTION</scope>
</reference>
<evidence type="ECO:0000269" key="1">
    <source>
    </source>
</evidence>
<evidence type="ECO:0000303" key="2">
    <source>
    </source>
</evidence>
<evidence type="ECO:0000303" key="3">
    <source>
    </source>
</evidence>
<evidence type="ECO:0000305" key="4"/>
<evidence type="ECO:0000305" key="5">
    <source>
    </source>
</evidence>
<evidence type="ECO:0000305" key="6">
    <source>
    </source>
</evidence>
<protein>
    <recommendedName>
        <fullName evidence="3">Pentapeptide repeat protein QnrB4</fullName>
    </recommendedName>
    <alternativeName>
        <fullName evidence="3">Plasmid-mediated quinolone resistance determinant</fullName>
    </alternativeName>
</protein>
<sequence length="215" mass="23979">MMTLALVGEKIDRNRFTGEKVENSTFFNCDFSGADLSGTEFIGCQFYDRESQKGCNFSRANLKDAIFKSCDLSMADFRNINALGIEIRHCRAQGSDFRGASFMNMITTRTWFCSAYITNTNLSYANFSKVVLEKCELWENRWMGTQVLGATFSGSDLSGGEFSSFDWRAANVTHCDLTNSELGDLDIRGVDLQGVKLDSYQASLLLERLGIAVMG</sequence>
<proteinExistence type="inferred from homology"/>